<protein>
    <recommendedName>
        <fullName>GTP pyrophosphokinase</fullName>
        <ecNumber>2.7.6.5</ecNumber>
    </recommendedName>
    <alternativeName>
        <fullName>(p)ppGpp synthase</fullName>
    </alternativeName>
    <alternativeName>
        <fullName>ATP:GTP 3'-pyrophosphotransferase</fullName>
    </alternativeName>
    <alternativeName>
        <fullName>ppGpp synthase I</fullName>
    </alternativeName>
</protein>
<organism>
    <name type="scientific">Staphylococcus aureus (strain MRSA252)</name>
    <dbReference type="NCBI Taxonomy" id="282458"/>
    <lineage>
        <taxon>Bacteria</taxon>
        <taxon>Bacillati</taxon>
        <taxon>Bacillota</taxon>
        <taxon>Bacilli</taxon>
        <taxon>Bacillales</taxon>
        <taxon>Staphylococcaceae</taxon>
        <taxon>Staphylococcus</taxon>
    </lineage>
</organism>
<name>RELA_STAAR</name>
<gene>
    <name type="primary">relA</name>
    <name type="synonym">rel</name>
    <name type="ordered locus">SAR1714</name>
</gene>
<keyword id="KW-0067">ATP-binding</keyword>
<keyword id="KW-0342">GTP-binding</keyword>
<keyword id="KW-0418">Kinase</keyword>
<keyword id="KW-0547">Nucleotide-binding</keyword>
<keyword id="KW-0808">Transferase</keyword>
<evidence type="ECO:0000250" key="1"/>
<evidence type="ECO:0000255" key="2">
    <source>
        <dbReference type="PROSITE-ProRule" id="PRU01007"/>
    </source>
</evidence>
<evidence type="ECO:0000255" key="3">
    <source>
        <dbReference type="PROSITE-ProRule" id="PRU01175"/>
    </source>
</evidence>
<evidence type="ECO:0000255" key="4">
    <source>
        <dbReference type="PROSITE-ProRule" id="PRU01228"/>
    </source>
</evidence>
<evidence type="ECO:0000305" key="5"/>
<reference key="1">
    <citation type="journal article" date="2004" name="Proc. Natl. Acad. Sci. U.S.A.">
        <title>Complete genomes of two clinical Staphylococcus aureus strains: evidence for the rapid evolution of virulence and drug resistance.</title>
        <authorList>
            <person name="Holden M.T.G."/>
            <person name="Feil E.J."/>
            <person name="Lindsay J.A."/>
            <person name="Peacock S.J."/>
            <person name="Day N.P.J."/>
            <person name="Enright M.C."/>
            <person name="Foster T.J."/>
            <person name="Moore C.E."/>
            <person name="Hurst L."/>
            <person name="Atkin R."/>
            <person name="Barron A."/>
            <person name="Bason N."/>
            <person name="Bentley S.D."/>
            <person name="Chillingworth C."/>
            <person name="Chillingworth T."/>
            <person name="Churcher C."/>
            <person name="Clark L."/>
            <person name="Corton C."/>
            <person name="Cronin A."/>
            <person name="Doggett J."/>
            <person name="Dowd L."/>
            <person name="Feltwell T."/>
            <person name="Hance Z."/>
            <person name="Harris B."/>
            <person name="Hauser H."/>
            <person name="Holroyd S."/>
            <person name="Jagels K."/>
            <person name="James K.D."/>
            <person name="Lennard N."/>
            <person name="Line A."/>
            <person name="Mayes R."/>
            <person name="Moule S."/>
            <person name="Mungall K."/>
            <person name="Ormond D."/>
            <person name="Quail M.A."/>
            <person name="Rabbinowitsch E."/>
            <person name="Rutherford K.M."/>
            <person name="Sanders M."/>
            <person name="Sharp S."/>
            <person name="Simmonds M."/>
            <person name="Stevens K."/>
            <person name="Whitehead S."/>
            <person name="Barrell B.G."/>
            <person name="Spratt B.G."/>
            <person name="Parkhill J."/>
        </authorList>
    </citation>
    <scope>NUCLEOTIDE SEQUENCE [LARGE SCALE GENOMIC DNA]</scope>
    <source>
        <strain>MRSA252</strain>
    </source>
</reference>
<accession>Q6GG70</accession>
<comment type="function">
    <text evidence="1">In eubacteria ppGpp (guanosine 3'-diphosphate 5'-diphosphate) is a mediator of the stringent response that coordinates a variety of cellular activities in response to changes in nutritional abundance. This enzyme catalyzes the formation of pppGpp which is then hydrolyzed to form ppGpp (By similarity).</text>
</comment>
<comment type="catalytic activity">
    <reaction>
        <text>GTP + ATP = guanosine 3'-diphosphate 5'-triphosphate + AMP</text>
        <dbReference type="Rhea" id="RHEA:22088"/>
        <dbReference type="ChEBI" id="CHEBI:30616"/>
        <dbReference type="ChEBI" id="CHEBI:37565"/>
        <dbReference type="ChEBI" id="CHEBI:142410"/>
        <dbReference type="ChEBI" id="CHEBI:456215"/>
        <dbReference type="EC" id="2.7.6.5"/>
    </reaction>
</comment>
<comment type="pathway">
    <text>Purine metabolism; ppGpp biosynthesis; ppGpp from GTP: step 1/2.</text>
</comment>
<comment type="similarity">
    <text evidence="5">Belongs to the RelA/SpoT family.</text>
</comment>
<feature type="chain" id="PRO_0000166557" description="GTP pyrophosphokinase">
    <location>
        <begin position="1"/>
        <end position="736"/>
    </location>
</feature>
<feature type="domain" description="HD" evidence="3">
    <location>
        <begin position="57"/>
        <end position="156"/>
    </location>
</feature>
<feature type="domain" description="TGS" evidence="4">
    <location>
        <begin position="400"/>
        <end position="461"/>
    </location>
</feature>
<feature type="domain" description="ACT" evidence="2">
    <location>
        <begin position="662"/>
        <end position="736"/>
    </location>
</feature>
<sequence>MNGVYHIMNNEYPYSADEVLHKAKSYLSADEYEYVLKSYHIAYEAHKGQFRKNGLPYIMHPIQVAGILTEMRLDGPTIVAGFLHDVIEDTPYTFEDVKEMFNEEVARIVDGVTKLKKVKYRSKEEQQAENHRKLFIAIAKDVRVILVKLADRLHNMRTLKAMPREKQIRISRETLEIYAPLAHRLGINTIKWELEDTALRYIDNVQYFRIVNLMKKKRSEREAYIETAIDRIRTEMDRMNIEGDINGRPKHIYSIYRKMMKQKKQFDQIFDLLAIRVIVNSINDCYAILGLVHTLWKPMPGRFKDYIAMPKQNLYQSLHTTVVGPNGDPLEIQIRTFDMHEIAEHGVAAHWAYKEGKKVSEKDQTYQNKLNWLKELAEADHTSSDAQEFMETLKYDLQSDKVYAFTPASDVIELPYGAVPIDFAYAIHSEVGNKMIGAKVNGKIVPIDYILQTGDIVEIRTSKHSYGPSRDWLKIVKSSSAKGKIKSFFKKQDRSSNIEKGRMMVEAEIKEQGFRVEDILTEKNIQVVNEKYNFANEDDLFAAVGFGGVTSLQIVNKLTERQRILDKQRALNEAQEVTKSLPIKDNIITDSGVYVEGLENVLIKLSKCCNPIPGDDIVGYITKGHGIKVHRTDCPNIKNETERLINVEWVKSKDATQKYQVDLEVTAYDRNGLLNEVLQAVSSTAGNLIKVSGRSDIDKNAIINISVMVKNVNDVYRVVEKIKQLGDVYTVTRVWN</sequence>
<proteinExistence type="inferred from homology"/>
<dbReference type="EC" id="2.7.6.5"/>
<dbReference type="EMBL" id="BX571856">
    <property type="protein sequence ID" value="CAG40705.1"/>
    <property type="molecule type" value="Genomic_DNA"/>
</dbReference>
<dbReference type="SMR" id="Q6GG70"/>
<dbReference type="KEGG" id="sar:SAR1714"/>
<dbReference type="HOGENOM" id="CLU_012300_3_0_9"/>
<dbReference type="UniPathway" id="UPA00908">
    <property type="reaction ID" value="UER00884"/>
</dbReference>
<dbReference type="Proteomes" id="UP000000596">
    <property type="component" value="Chromosome"/>
</dbReference>
<dbReference type="GO" id="GO:0005886">
    <property type="term" value="C:plasma membrane"/>
    <property type="evidence" value="ECO:0007669"/>
    <property type="project" value="TreeGrafter"/>
</dbReference>
<dbReference type="GO" id="GO:0005524">
    <property type="term" value="F:ATP binding"/>
    <property type="evidence" value="ECO:0007669"/>
    <property type="project" value="UniProtKB-KW"/>
</dbReference>
<dbReference type="GO" id="GO:0005525">
    <property type="term" value="F:GTP binding"/>
    <property type="evidence" value="ECO:0007669"/>
    <property type="project" value="UniProtKB-KW"/>
</dbReference>
<dbReference type="GO" id="GO:0008728">
    <property type="term" value="F:GTP diphosphokinase activity"/>
    <property type="evidence" value="ECO:0007669"/>
    <property type="project" value="UniProtKB-EC"/>
</dbReference>
<dbReference type="GO" id="GO:0016301">
    <property type="term" value="F:kinase activity"/>
    <property type="evidence" value="ECO:0007669"/>
    <property type="project" value="UniProtKB-KW"/>
</dbReference>
<dbReference type="GO" id="GO:0015970">
    <property type="term" value="P:guanosine tetraphosphate biosynthetic process"/>
    <property type="evidence" value="ECO:0007669"/>
    <property type="project" value="UniProtKB-UniPathway"/>
</dbReference>
<dbReference type="CDD" id="cd04876">
    <property type="entry name" value="ACT_RelA-SpoT"/>
    <property type="match status" value="1"/>
</dbReference>
<dbReference type="CDD" id="cd00077">
    <property type="entry name" value="HDc"/>
    <property type="match status" value="1"/>
</dbReference>
<dbReference type="CDD" id="cd05399">
    <property type="entry name" value="NT_Rel-Spo_like"/>
    <property type="match status" value="1"/>
</dbReference>
<dbReference type="CDD" id="cd01668">
    <property type="entry name" value="TGS_RSH"/>
    <property type="match status" value="1"/>
</dbReference>
<dbReference type="FunFam" id="3.10.20.30:FF:000002">
    <property type="entry name" value="GTP pyrophosphokinase (RelA/SpoT)"/>
    <property type="match status" value="1"/>
</dbReference>
<dbReference type="FunFam" id="1.10.3210.10:FF:000001">
    <property type="entry name" value="GTP pyrophosphokinase RelA"/>
    <property type="match status" value="1"/>
</dbReference>
<dbReference type="FunFam" id="3.30.460.10:FF:000001">
    <property type="entry name" value="GTP pyrophosphokinase RelA"/>
    <property type="match status" value="1"/>
</dbReference>
<dbReference type="Gene3D" id="3.10.20.30">
    <property type="match status" value="1"/>
</dbReference>
<dbReference type="Gene3D" id="3.30.70.260">
    <property type="match status" value="1"/>
</dbReference>
<dbReference type="Gene3D" id="3.30.460.10">
    <property type="entry name" value="Beta Polymerase, domain 2"/>
    <property type="match status" value="1"/>
</dbReference>
<dbReference type="Gene3D" id="1.10.3210.10">
    <property type="entry name" value="Hypothetical protein af1432"/>
    <property type="match status" value="1"/>
</dbReference>
<dbReference type="InterPro" id="IPR045865">
    <property type="entry name" value="ACT-like_dom_sf"/>
</dbReference>
<dbReference type="InterPro" id="IPR002912">
    <property type="entry name" value="ACT_dom"/>
</dbReference>
<dbReference type="InterPro" id="IPR012675">
    <property type="entry name" value="Beta-grasp_dom_sf"/>
</dbReference>
<dbReference type="InterPro" id="IPR003607">
    <property type="entry name" value="HD/PDEase_dom"/>
</dbReference>
<dbReference type="InterPro" id="IPR006674">
    <property type="entry name" value="HD_domain"/>
</dbReference>
<dbReference type="InterPro" id="IPR043519">
    <property type="entry name" value="NT_sf"/>
</dbReference>
<dbReference type="InterPro" id="IPR004811">
    <property type="entry name" value="RelA/Spo_fam"/>
</dbReference>
<dbReference type="InterPro" id="IPR045600">
    <property type="entry name" value="RelA/SpoT_AH_RIS"/>
</dbReference>
<dbReference type="InterPro" id="IPR007685">
    <property type="entry name" value="RelA_SpoT"/>
</dbReference>
<dbReference type="InterPro" id="IPR004095">
    <property type="entry name" value="TGS"/>
</dbReference>
<dbReference type="InterPro" id="IPR012676">
    <property type="entry name" value="TGS-like"/>
</dbReference>
<dbReference type="InterPro" id="IPR033655">
    <property type="entry name" value="TGS_RelA/SpoT"/>
</dbReference>
<dbReference type="NCBIfam" id="TIGR00691">
    <property type="entry name" value="spoT_relA"/>
    <property type="match status" value="1"/>
</dbReference>
<dbReference type="PANTHER" id="PTHR21262:SF31">
    <property type="entry name" value="GTP PYROPHOSPHOKINASE"/>
    <property type="match status" value="1"/>
</dbReference>
<dbReference type="PANTHER" id="PTHR21262">
    <property type="entry name" value="GUANOSINE-3',5'-BIS DIPHOSPHATE 3'-PYROPHOSPHOHYDROLASE"/>
    <property type="match status" value="1"/>
</dbReference>
<dbReference type="Pfam" id="PF13291">
    <property type="entry name" value="ACT_4"/>
    <property type="match status" value="1"/>
</dbReference>
<dbReference type="Pfam" id="PF13328">
    <property type="entry name" value="HD_4"/>
    <property type="match status" value="1"/>
</dbReference>
<dbReference type="Pfam" id="PF19296">
    <property type="entry name" value="RelA_AH_RIS"/>
    <property type="match status" value="1"/>
</dbReference>
<dbReference type="Pfam" id="PF04607">
    <property type="entry name" value="RelA_SpoT"/>
    <property type="match status" value="1"/>
</dbReference>
<dbReference type="Pfam" id="PF02824">
    <property type="entry name" value="TGS"/>
    <property type="match status" value="1"/>
</dbReference>
<dbReference type="SMART" id="SM00471">
    <property type="entry name" value="HDc"/>
    <property type="match status" value="1"/>
</dbReference>
<dbReference type="SMART" id="SM00954">
    <property type="entry name" value="RelA_SpoT"/>
    <property type="match status" value="1"/>
</dbReference>
<dbReference type="SUPFAM" id="SSF55021">
    <property type="entry name" value="ACT-like"/>
    <property type="match status" value="1"/>
</dbReference>
<dbReference type="SUPFAM" id="SSF109604">
    <property type="entry name" value="HD-domain/PDEase-like"/>
    <property type="match status" value="1"/>
</dbReference>
<dbReference type="SUPFAM" id="SSF81301">
    <property type="entry name" value="Nucleotidyltransferase"/>
    <property type="match status" value="1"/>
</dbReference>
<dbReference type="SUPFAM" id="SSF81271">
    <property type="entry name" value="TGS-like"/>
    <property type="match status" value="1"/>
</dbReference>
<dbReference type="PROSITE" id="PS51671">
    <property type="entry name" value="ACT"/>
    <property type="match status" value="1"/>
</dbReference>
<dbReference type="PROSITE" id="PS51831">
    <property type="entry name" value="HD"/>
    <property type="match status" value="1"/>
</dbReference>
<dbReference type="PROSITE" id="PS51880">
    <property type="entry name" value="TGS"/>
    <property type="match status" value="1"/>
</dbReference>